<protein>
    <recommendedName>
        <fullName evidence="1">DNA-directed RNA polymerase subunit beta''</fullName>
        <ecNumber evidence="1">2.7.7.6</ecNumber>
    </recommendedName>
    <alternativeName>
        <fullName evidence="1">PEP</fullName>
    </alternativeName>
    <alternativeName>
        <fullName evidence="1">Plastid-encoded RNA polymerase subunit beta''</fullName>
        <shortName evidence="1">RNA polymerase subunit beta''</shortName>
    </alternativeName>
</protein>
<keyword id="KW-0150">Chloroplast</keyword>
<keyword id="KW-0240">DNA-directed RNA polymerase</keyword>
<keyword id="KW-0479">Metal-binding</keyword>
<keyword id="KW-0548">Nucleotidyltransferase</keyword>
<keyword id="KW-0934">Plastid</keyword>
<keyword id="KW-1185">Reference proteome</keyword>
<keyword id="KW-0804">Transcription</keyword>
<keyword id="KW-0808">Transferase</keyword>
<keyword id="KW-0862">Zinc</keyword>
<reference key="1">
    <citation type="journal article" date="2006" name="Plant Cell Rep.">
        <title>The complete chloroplast genome sequences of Solanum tuberosum and comparative analysis with Solanaceae species identified the presence of a 241-bp deletion in cultivated potato chloroplast DNA sequence.</title>
        <authorList>
            <person name="Chung H.-J."/>
            <person name="Jung J.D."/>
            <person name="Park H.-W."/>
            <person name="Kim J.-H."/>
            <person name="Cha H.W."/>
            <person name="Min S.R."/>
            <person name="Jeong W.-J."/>
            <person name="Liu J.R."/>
        </authorList>
    </citation>
    <scope>NUCLEOTIDE SEQUENCE [LARGE SCALE GENOMIC DNA]</scope>
    <source>
        <strain>cv. Desiree</strain>
    </source>
</reference>
<reference key="2">
    <citation type="submission" date="2006-02" db="EMBL/GenBank/DDBJ databases">
        <title>Complete chloroplast genome sequences of Solanum tuberosum cultivar Desiree and comparative analyses with other Solanaceae genomes.</title>
        <authorList>
            <person name="Gargano D."/>
            <person name="Scotti N."/>
            <person name="Vezzi A."/>
            <person name="Bilardi A."/>
            <person name="Valle G."/>
            <person name="Grillo S."/>
            <person name="Cardi T."/>
        </authorList>
    </citation>
    <scope>NUCLEOTIDE SEQUENCE [LARGE SCALE GENOMIC DNA]</scope>
    <source>
        <strain>cv. Desiree</strain>
    </source>
</reference>
<evidence type="ECO:0000255" key="1">
    <source>
        <dbReference type="HAMAP-Rule" id="MF_01324"/>
    </source>
</evidence>
<evidence type="ECO:0000305" key="2"/>
<comment type="function">
    <text evidence="1">DNA-dependent RNA polymerase catalyzes the transcription of DNA into RNA using the four ribonucleoside triphosphates as substrates.</text>
</comment>
<comment type="catalytic activity">
    <reaction evidence="1">
        <text>RNA(n) + a ribonucleoside 5'-triphosphate = RNA(n+1) + diphosphate</text>
        <dbReference type="Rhea" id="RHEA:21248"/>
        <dbReference type="Rhea" id="RHEA-COMP:14527"/>
        <dbReference type="Rhea" id="RHEA-COMP:17342"/>
        <dbReference type="ChEBI" id="CHEBI:33019"/>
        <dbReference type="ChEBI" id="CHEBI:61557"/>
        <dbReference type="ChEBI" id="CHEBI:140395"/>
        <dbReference type="EC" id="2.7.7.6"/>
    </reaction>
</comment>
<comment type="cofactor">
    <cofactor evidence="1">
        <name>Zn(2+)</name>
        <dbReference type="ChEBI" id="CHEBI:29105"/>
    </cofactor>
    <text evidence="1">Binds 1 Zn(2+) ion per subunit.</text>
</comment>
<comment type="subunit">
    <text evidence="1">In plastids the minimal PEP RNA polymerase catalytic core is composed of four subunits: alpha, beta, beta', and beta''. When a (nuclear-encoded) sigma factor is associated with the core the holoenzyme is formed, which can initiate transcription.</text>
</comment>
<comment type="subcellular location">
    <subcellularLocation>
        <location evidence="1">Plastid</location>
        <location evidence="1">Chloroplast</location>
    </subcellularLocation>
</comment>
<comment type="similarity">
    <text evidence="1">Belongs to the RNA polymerase beta' chain family. RpoC2 subfamily.</text>
</comment>
<proteinExistence type="inferred from homology"/>
<dbReference type="EC" id="2.7.7.6" evidence="1"/>
<dbReference type="EMBL" id="DQ231562">
    <property type="protein sequence ID" value="ABB90033.1"/>
    <property type="molecule type" value="Genomic_DNA"/>
</dbReference>
<dbReference type="EMBL" id="DQ386163">
    <property type="protein sequence ID" value="ABD47047.1"/>
    <property type="molecule type" value="Genomic_DNA"/>
</dbReference>
<dbReference type="RefSeq" id="YP_635629.1">
    <property type="nucleotide sequence ID" value="NC_008096.2"/>
</dbReference>
<dbReference type="SMR" id="Q2VEI6"/>
<dbReference type="FunCoup" id="Q2VEI6">
    <property type="interactions" value="60"/>
</dbReference>
<dbReference type="STRING" id="4113.Q2VEI6"/>
<dbReference type="PaxDb" id="4113-PGSC0003DMT400052303"/>
<dbReference type="GeneID" id="4099930"/>
<dbReference type="KEGG" id="sot:4099930"/>
<dbReference type="eggNOG" id="ENOG502QPYA">
    <property type="taxonomic scope" value="Eukaryota"/>
</dbReference>
<dbReference type="InParanoid" id="Q2VEI6"/>
<dbReference type="OrthoDB" id="498011at2759"/>
<dbReference type="Proteomes" id="UP000011115">
    <property type="component" value="Unassembled WGS sequence"/>
</dbReference>
<dbReference type="GO" id="GO:0009507">
    <property type="term" value="C:chloroplast"/>
    <property type="evidence" value="ECO:0007669"/>
    <property type="project" value="UniProtKB-SubCell"/>
</dbReference>
<dbReference type="GO" id="GO:0000428">
    <property type="term" value="C:DNA-directed RNA polymerase complex"/>
    <property type="evidence" value="ECO:0007669"/>
    <property type="project" value="UniProtKB-KW"/>
</dbReference>
<dbReference type="GO" id="GO:0005739">
    <property type="term" value="C:mitochondrion"/>
    <property type="evidence" value="ECO:0007669"/>
    <property type="project" value="GOC"/>
</dbReference>
<dbReference type="GO" id="GO:0003677">
    <property type="term" value="F:DNA binding"/>
    <property type="evidence" value="ECO:0007669"/>
    <property type="project" value="UniProtKB-UniRule"/>
</dbReference>
<dbReference type="GO" id="GO:0003899">
    <property type="term" value="F:DNA-directed RNA polymerase activity"/>
    <property type="evidence" value="ECO:0007669"/>
    <property type="project" value="UniProtKB-UniRule"/>
</dbReference>
<dbReference type="GO" id="GO:0008270">
    <property type="term" value="F:zinc ion binding"/>
    <property type="evidence" value="ECO:0007669"/>
    <property type="project" value="UniProtKB-UniRule"/>
</dbReference>
<dbReference type="GO" id="GO:0006351">
    <property type="term" value="P:DNA-templated transcription"/>
    <property type="evidence" value="ECO:0007669"/>
    <property type="project" value="UniProtKB-UniRule"/>
</dbReference>
<dbReference type="CDD" id="cd02655">
    <property type="entry name" value="RNAP_beta'_C"/>
    <property type="match status" value="1"/>
</dbReference>
<dbReference type="FunFam" id="1.10.132.30:FF:000002">
    <property type="entry name" value="DNA-directed RNA polymerase subunit beta"/>
    <property type="match status" value="1"/>
</dbReference>
<dbReference type="Gene3D" id="1.10.132.30">
    <property type="match status" value="1"/>
</dbReference>
<dbReference type="Gene3D" id="1.10.150.390">
    <property type="match status" value="1"/>
</dbReference>
<dbReference type="Gene3D" id="1.10.1790.20">
    <property type="match status" value="1"/>
</dbReference>
<dbReference type="Gene3D" id="1.10.274.100">
    <property type="entry name" value="RNA polymerase Rpb1, domain 3"/>
    <property type="match status" value="1"/>
</dbReference>
<dbReference type="HAMAP" id="MF_01324">
    <property type="entry name" value="RNApol_bact_RpoC2"/>
    <property type="match status" value="1"/>
</dbReference>
<dbReference type="InterPro" id="IPR012756">
    <property type="entry name" value="DNA-dir_RpoC2_beta_pp"/>
</dbReference>
<dbReference type="InterPro" id="IPR050254">
    <property type="entry name" value="RNA_pol_beta''_euk"/>
</dbReference>
<dbReference type="InterPro" id="IPR042102">
    <property type="entry name" value="RNA_pol_Rpb1_3_sf"/>
</dbReference>
<dbReference type="InterPro" id="IPR007083">
    <property type="entry name" value="RNA_pol_Rpb1_4"/>
</dbReference>
<dbReference type="InterPro" id="IPR007081">
    <property type="entry name" value="RNA_pol_Rpb1_5"/>
</dbReference>
<dbReference type="InterPro" id="IPR038120">
    <property type="entry name" value="Rpb1_funnel_sf"/>
</dbReference>
<dbReference type="NCBIfam" id="TIGR02388">
    <property type="entry name" value="rpoC2_cyan"/>
    <property type="match status" value="1"/>
</dbReference>
<dbReference type="PANTHER" id="PTHR34995">
    <property type="entry name" value="DNA-DIRECTED RNA POLYMERASE SUBUNIT BETA"/>
    <property type="match status" value="1"/>
</dbReference>
<dbReference type="PANTHER" id="PTHR34995:SF1">
    <property type="entry name" value="DNA-DIRECTED RNA POLYMERASE SUBUNIT BETA"/>
    <property type="match status" value="1"/>
</dbReference>
<dbReference type="Pfam" id="PF05000">
    <property type="entry name" value="RNA_pol_Rpb1_4"/>
    <property type="match status" value="1"/>
</dbReference>
<dbReference type="Pfam" id="PF04998">
    <property type="entry name" value="RNA_pol_Rpb1_5"/>
    <property type="match status" value="2"/>
</dbReference>
<dbReference type="SUPFAM" id="SSF64484">
    <property type="entry name" value="beta and beta-prime subunits of DNA dependent RNA-polymerase"/>
    <property type="match status" value="1"/>
</dbReference>
<feature type="chain" id="PRO_0000225338" description="DNA-directed RNA polymerase subunit beta''">
    <location>
        <begin position="1"/>
        <end position="1392"/>
    </location>
</feature>
<feature type="binding site" evidence="1">
    <location>
        <position position="224"/>
    </location>
    <ligand>
        <name>Zn(2+)</name>
        <dbReference type="ChEBI" id="CHEBI:29105"/>
    </ligand>
</feature>
<feature type="binding site" evidence="1">
    <location>
        <position position="295"/>
    </location>
    <ligand>
        <name>Zn(2+)</name>
        <dbReference type="ChEBI" id="CHEBI:29105"/>
    </ligand>
</feature>
<feature type="binding site" evidence="1">
    <location>
        <position position="302"/>
    </location>
    <ligand>
        <name>Zn(2+)</name>
        <dbReference type="ChEBI" id="CHEBI:29105"/>
    </ligand>
</feature>
<feature type="binding site" evidence="1">
    <location>
        <position position="305"/>
    </location>
    <ligand>
        <name>Zn(2+)</name>
        <dbReference type="ChEBI" id="CHEBI:29105"/>
    </ligand>
</feature>
<feature type="sequence conflict" description="In Ref. 2; ABD47047." evidence="2" ref="2">
    <original>P</original>
    <variation>S</variation>
    <location>
        <position position="916"/>
    </location>
</feature>
<feature type="sequence conflict" description="In Ref. 2; ABD47047." evidence="2" ref="2">
    <original>E</original>
    <variation>K</variation>
    <location>
        <position position="1085"/>
    </location>
</feature>
<feature type="sequence conflict" description="In Ref. 2; ABD47047." evidence="2" ref="2">
    <original>F</original>
    <variation>V</variation>
    <location>
        <position position="1095"/>
    </location>
</feature>
<feature type="sequence conflict" description="In Ref. 2; ABD47047." evidence="2" ref="2">
    <original>NQGN</original>
    <variation>YEGD</variation>
    <location>
        <begin position="1128"/>
        <end position="1131"/>
    </location>
</feature>
<feature type="sequence conflict" description="In Ref. 2; ABD47047." evidence="2" ref="2">
    <original>ISD</original>
    <variation>RSG</variation>
    <location>
        <begin position="1142"/>
        <end position="1144"/>
    </location>
</feature>
<gene>
    <name evidence="1" type="primary">rpoC2</name>
</gene>
<geneLocation type="chloroplast"/>
<organism>
    <name type="scientific">Solanum tuberosum</name>
    <name type="common">Potato</name>
    <dbReference type="NCBI Taxonomy" id="4113"/>
    <lineage>
        <taxon>Eukaryota</taxon>
        <taxon>Viridiplantae</taxon>
        <taxon>Streptophyta</taxon>
        <taxon>Embryophyta</taxon>
        <taxon>Tracheophyta</taxon>
        <taxon>Spermatophyta</taxon>
        <taxon>Magnoliopsida</taxon>
        <taxon>eudicotyledons</taxon>
        <taxon>Gunneridae</taxon>
        <taxon>Pentapetalae</taxon>
        <taxon>asterids</taxon>
        <taxon>lamiids</taxon>
        <taxon>Solanales</taxon>
        <taxon>Solanaceae</taxon>
        <taxon>Solanoideae</taxon>
        <taxon>Solaneae</taxon>
        <taxon>Solanum</taxon>
    </lineage>
</organism>
<sequence>MEVLMAERANLVFHNKAIDGTAMKRLISRLIEHFGMAYTSHILDQVKTLGFQQATATSISLGIDDLLTIPSKGWLVQDAEQQSLILEKHHHYGNVHAVEKLRQSIEIWYATSEYLRQEMNPNFRMTDPFNPVHIMSFSGARGNASQVHQLVGMRGLMSDPQGQMIDLPIQSNLREGLSLTEYIISCYGARKGVVDTAVRTSDAGYLTRRLVEVVQHIVVRRTDCGTARGISVSPRNGIMPERIFSQTLIGRVLADDIYMGSRCIATRNQAIGIGLVNRFITFRAQPISIRTPFTCRSTSWICRLCYGRSPTHGDLVELGEAVGIIAGQSIGEPGTQLTLRTFHTGGVFTGGTAEHVRAPSNGKIKFNEDLVHPTRTRHGHPAFLCSIDLYVTIESEDILHNVNIPPKSLLLVQNDQYVESEQVIAEIRAGISTLNFKEKVRKHIYSDSDGEMHWSTDVYHAPEFTYGNVHLLPKTSHLWILLGGPCRSSLVYLSIHKDQDQMNAHSLSGKRRYTSNLSVTNDQARQKLFSSDFYGQKEDRIPDYSDLNRIICTGQYNLVYSPILHGNSDLLSKRRRNKFIIPLHSIQELENELMPCSGISIEIPVNGIFRRNSILAYFDDPRYRRKSSGIIKYGTIETHSVIKKEDLIEYRGVKEFRPKYQMKVDRFFFIPEEVHILPGSSSIMVRNNSIVGVDTQITLNLRSRVGGLVRVERKKKRIELKIFSGDIHFPGETDKISRHTGVLIPPGTGKRNSKEYKKVKNWIYVQRITPSKKRFFVLVRPVVTYEITDGINLGTLFPPDPLQERDNVQLRIVNYILYGNGKPIRGISDTSIQLVRTCLVLNWNQDKKSSSCEEARASFVEIRTNGLIRHFLRINLVKSPISYIGKRNDPSGSGLLSDNGSDCTNINPFSAIYSYPKAKIQQSLNQPQGTIHTLLNRNKECQSLIILSAANCSRMEPFKDVKYHSVIKESIKKDPLIPIRNSLGPLGTCLPIENFYSSYHLITHNQILVTKYLQLDNLKQTFQVIKLKYYLMDENGKIFNPDPCRNIILNPVNLNWSFLHHNYCAETSKIISLGQFICENVCIAENGPPLKSGQFILVQVDSIVIRSAKPYLATPGATVHGHYGETLNQGNTLVTFIYEKSISDDITQGLPKVEQVLEVRSIDSISMNLEKRVESWNKCIPRILGIPWGFLIGAELTIAQSRISLVNKIQQVYRSQGVQIHNRHIEIIVRQITSKVLISEDGMSNVFSPGELIGLLRAERMGRALEEAICYRVVLLGITRASLNTQSFISEASFQETARVLAKAALRGRIDWLKGLKENVVLGGVIPVGTGFKGLVHPSKQHNNIPLETKKTNLFEGEMRDILFHHRKLFDSCLSKKFHDIPEQSFIGFNDS</sequence>
<name>RPOC2_SOLTU</name>
<accession>Q2VEI6</accession>
<accession>Q27S60</accession>